<reference key="1">
    <citation type="journal article" date="2003" name="Proc. Natl. Acad. Sci. U.S.A.">
        <title>The complete genome sequence of the carcinogenic bacterium Helicobacter hepaticus.</title>
        <authorList>
            <person name="Suerbaum S."/>
            <person name="Josenhans C."/>
            <person name="Sterzenbach T."/>
            <person name="Drescher B."/>
            <person name="Brandt P."/>
            <person name="Bell M."/>
            <person name="Droege M."/>
            <person name="Fartmann B."/>
            <person name="Fischer H.-P."/>
            <person name="Ge Z."/>
            <person name="Hoerster A."/>
            <person name="Holland R."/>
            <person name="Klein K."/>
            <person name="Koenig J."/>
            <person name="Macko L."/>
            <person name="Mendz G.L."/>
            <person name="Nyakatura G."/>
            <person name="Schauer D.B."/>
            <person name="Shen Z."/>
            <person name="Weber J."/>
            <person name="Frosch M."/>
            <person name="Fox J.G."/>
        </authorList>
    </citation>
    <scope>NUCLEOTIDE SEQUENCE [LARGE SCALE GENOMIC DNA]</scope>
    <source>
        <strain>ATCC 51449 / 3B1</strain>
    </source>
</reference>
<protein>
    <recommendedName>
        <fullName evidence="1">Succinyl-diaminopimelate desuccinylase</fullName>
        <shortName evidence="1">SDAP desuccinylase</shortName>
        <ecNumber evidence="1">3.5.1.18</ecNumber>
    </recommendedName>
    <alternativeName>
        <fullName evidence="1">N-succinyl-LL-2,6-diaminoheptanedioate amidohydrolase</fullName>
    </alternativeName>
</protein>
<name>DAPE_HELHP</name>
<proteinExistence type="inferred from homology"/>
<organism>
    <name type="scientific">Helicobacter hepaticus (strain ATCC 51449 / 3B1)</name>
    <dbReference type="NCBI Taxonomy" id="235279"/>
    <lineage>
        <taxon>Bacteria</taxon>
        <taxon>Pseudomonadati</taxon>
        <taxon>Campylobacterota</taxon>
        <taxon>Epsilonproteobacteria</taxon>
        <taxon>Campylobacterales</taxon>
        <taxon>Helicobacteraceae</taxon>
        <taxon>Helicobacter</taxon>
    </lineage>
</organism>
<comment type="function">
    <text evidence="1">Catalyzes the hydrolysis of N-succinyl-L,L-diaminopimelic acid (SDAP), forming succinate and LL-2,6-diaminopimelate (DAP), an intermediate involved in the bacterial biosynthesis of lysine and meso-diaminopimelic acid, an essential component of bacterial cell walls.</text>
</comment>
<comment type="catalytic activity">
    <reaction evidence="1">
        <text>N-succinyl-(2S,6S)-2,6-diaminopimelate + H2O = (2S,6S)-2,6-diaminopimelate + succinate</text>
        <dbReference type="Rhea" id="RHEA:22608"/>
        <dbReference type="ChEBI" id="CHEBI:15377"/>
        <dbReference type="ChEBI" id="CHEBI:30031"/>
        <dbReference type="ChEBI" id="CHEBI:57609"/>
        <dbReference type="ChEBI" id="CHEBI:58087"/>
        <dbReference type="EC" id="3.5.1.18"/>
    </reaction>
</comment>
<comment type="cofactor">
    <cofactor evidence="1">
        <name>Zn(2+)</name>
        <dbReference type="ChEBI" id="CHEBI:29105"/>
    </cofactor>
    <cofactor evidence="1">
        <name>Co(2+)</name>
        <dbReference type="ChEBI" id="CHEBI:48828"/>
    </cofactor>
    <text evidence="1">Binds 2 Zn(2+) or Co(2+) ions per subunit.</text>
</comment>
<comment type="pathway">
    <text evidence="1">Amino-acid biosynthesis; L-lysine biosynthesis via DAP pathway; LL-2,6-diaminopimelate from (S)-tetrahydrodipicolinate (succinylase route): step 3/3.</text>
</comment>
<comment type="subunit">
    <text evidence="1">Homodimer.</text>
</comment>
<comment type="similarity">
    <text evidence="1">Belongs to the peptidase M20A family. DapE subfamily.</text>
</comment>
<keyword id="KW-0028">Amino-acid biosynthesis</keyword>
<keyword id="KW-0170">Cobalt</keyword>
<keyword id="KW-0220">Diaminopimelate biosynthesis</keyword>
<keyword id="KW-0378">Hydrolase</keyword>
<keyword id="KW-0457">Lysine biosynthesis</keyword>
<keyword id="KW-0479">Metal-binding</keyword>
<keyword id="KW-1185">Reference proteome</keyword>
<keyword id="KW-0862">Zinc</keyword>
<accession>Q7VF72</accession>
<sequence length="392" mass="43230">MPLSLLQELIKRPSITPQECGIYEIILNKLNSLIQKEHIDTFIIEQEKEGVKNLFYLIAPKGADKSNLHHFCFAGHIDVVPTGEGWEFEPFCGTQDEKYIYGRGTQDMKGGISAFICAVCNILESHNTSSLPIMLSILLTSDEEGEGIYGTKFMLEELKKRDLLPHSCIVAEPTSINHTGDMLKIGRRGSINGTLIIEGKQGHVAYPQKCINPIELLGSKLGALAGIELDNGDSHFAPSKLVITDIRSGMEVVNVTPQNLKIMFNVRNSPLSNEDSIRSYITSILGSLPYELTLKTNSLPFITADDSEIVKSLCAIIERTLGITPQLSTSGGTSDARFFASYGVNVVEIGVPNDRIHAINERVSISDILALHDIFVEFLQLFIKNAKIENLK</sequence>
<gene>
    <name evidence="1" type="primary">dapE</name>
    <name type="ordered locus">HH_1805</name>
</gene>
<feature type="chain" id="PRO_0000375585" description="Succinyl-diaminopimelate desuccinylase">
    <location>
        <begin position="1"/>
        <end position="392"/>
    </location>
</feature>
<feature type="active site" evidence="1">
    <location>
        <position position="78"/>
    </location>
</feature>
<feature type="active site" description="Proton acceptor" evidence="1">
    <location>
        <position position="143"/>
    </location>
</feature>
<feature type="binding site" evidence="1">
    <location>
        <position position="76"/>
    </location>
    <ligand>
        <name>Zn(2+)</name>
        <dbReference type="ChEBI" id="CHEBI:29105"/>
        <label>1</label>
    </ligand>
</feature>
<feature type="binding site" evidence="1">
    <location>
        <position position="107"/>
    </location>
    <ligand>
        <name>Zn(2+)</name>
        <dbReference type="ChEBI" id="CHEBI:29105"/>
        <label>1</label>
    </ligand>
</feature>
<feature type="binding site" evidence="1">
    <location>
        <position position="107"/>
    </location>
    <ligand>
        <name>Zn(2+)</name>
        <dbReference type="ChEBI" id="CHEBI:29105"/>
        <label>2</label>
    </ligand>
</feature>
<feature type="binding site" evidence="1">
    <location>
        <position position="144"/>
    </location>
    <ligand>
        <name>Zn(2+)</name>
        <dbReference type="ChEBI" id="CHEBI:29105"/>
        <label>2</label>
    </ligand>
</feature>
<feature type="binding site" evidence="1">
    <location>
        <position position="172"/>
    </location>
    <ligand>
        <name>Zn(2+)</name>
        <dbReference type="ChEBI" id="CHEBI:29105"/>
        <label>1</label>
    </ligand>
</feature>
<feature type="binding site" evidence="1">
    <location>
        <position position="357"/>
    </location>
    <ligand>
        <name>Zn(2+)</name>
        <dbReference type="ChEBI" id="CHEBI:29105"/>
        <label>2</label>
    </ligand>
</feature>
<dbReference type="EC" id="3.5.1.18" evidence="1"/>
<dbReference type="EMBL" id="AE017125">
    <property type="protein sequence ID" value="AAP78402.1"/>
    <property type="molecule type" value="Genomic_DNA"/>
</dbReference>
<dbReference type="RefSeq" id="WP_011116644.1">
    <property type="nucleotide sequence ID" value="NC_004917.1"/>
</dbReference>
<dbReference type="SMR" id="Q7VF72"/>
<dbReference type="STRING" id="235279.HH_1805"/>
<dbReference type="KEGG" id="hhe:HH_1805"/>
<dbReference type="eggNOG" id="COG0624">
    <property type="taxonomic scope" value="Bacteria"/>
</dbReference>
<dbReference type="HOGENOM" id="CLU_021802_4_0_7"/>
<dbReference type="OrthoDB" id="5486471at2"/>
<dbReference type="UniPathway" id="UPA00034">
    <property type="reaction ID" value="UER00021"/>
</dbReference>
<dbReference type="Proteomes" id="UP000002495">
    <property type="component" value="Chromosome"/>
</dbReference>
<dbReference type="GO" id="GO:0008777">
    <property type="term" value="F:acetylornithine deacetylase activity"/>
    <property type="evidence" value="ECO:0007669"/>
    <property type="project" value="TreeGrafter"/>
</dbReference>
<dbReference type="GO" id="GO:0046872">
    <property type="term" value="F:metal ion binding"/>
    <property type="evidence" value="ECO:0007669"/>
    <property type="project" value="UniProtKB-KW"/>
</dbReference>
<dbReference type="GO" id="GO:0009014">
    <property type="term" value="F:succinyl-diaminopimelate desuccinylase activity"/>
    <property type="evidence" value="ECO:0007669"/>
    <property type="project" value="UniProtKB-EC"/>
</dbReference>
<dbReference type="GO" id="GO:0019877">
    <property type="term" value="P:diaminopimelate biosynthetic process"/>
    <property type="evidence" value="ECO:0007669"/>
    <property type="project" value="UniProtKB-KW"/>
</dbReference>
<dbReference type="GO" id="GO:0006526">
    <property type="term" value="P:L-arginine biosynthetic process"/>
    <property type="evidence" value="ECO:0007669"/>
    <property type="project" value="TreeGrafter"/>
</dbReference>
<dbReference type="GO" id="GO:0009089">
    <property type="term" value="P:lysine biosynthetic process via diaminopimelate"/>
    <property type="evidence" value="ECO:0007669"/>
    <property type="project" value="UniProtKB-UniPathway"/>
</dbReference>
<dbReference type="CDD" id="cd03891">
    <property type="entry name" value="M20_DapE_proteobac"/>
    <property type="match status" value="1"/>
</dbReference>
<dbReference type="Gene3D" id="3.30.70.360">
    <property type="match status" value="1"/>
</dbReference>
<dbReference type="Gene3D" id="3.40.630.10">
    <property type="entry name" value="Zn peptidases"/>
    <property type="match status" value="2"/>
</dbReference>
<dbReference type="HAMAP" id="MF_01690">
    <property type="entry name" value="DapE"/>
    <property type="match status" value="1"/>
</dbReference>
<dbReference type="InterPro" id="IPR036264">
    <property type="entry name" value="Bact_exopeptidase_dim_dom"/>
</dbReference>
<dbReference type="InterPro" id="IPR005941">
    <property type="entry name" value="DapE_proteobac"/>
</dbReference>
<dbReference type="InterPro" id="IPR002933">
    <property type="entry name" value="Peptidase_M20"/>
</dbReference>
<dbReference type="InterPro" id="IPR011650">
    <property type="entry name" value="Peptidase_M20_dimer"/>
</dbReference>
<dbReference type="InterPro" id="IPR050072">
    <property type="entry name" value="Peptidase_M20A"/>
</dbReference>
<dbReference type="NCBIfam" id="TIGR01246">
    <property type="entry name" value="dapE_proteo"/>
    <property type="match status" value="1"/>
</dbReference>
<dbReference type="NCBIfam" id="NF009557">
    <property type="entry name" value="PRK13009.1"/>
    <property type="match status" value="1"/>
</dbReference>
<dbReference type="PANTHER" id="PTHR43808">
    <property type="entry name" value="ACETYLORNITHINE DEACETYLASE"/>
    <property type="match status" value="1"/>
</dbReference>
<dbReference type="PANTHER" id="PTHR43808:SF31">
    <property type="entry name" value="N-ACETYL-L-CITRULLINE DEACETYLASE"/>
    <property type="match status" value="1"/>
</dbReference>
<dbReference type="Pfam" id="PF07687">
    <property type="entry name" value="M20_dimer"/>
    <property type="match status" value="1"/>
</dbReference>
<dbReference type="Pfam" id="PF01546">
    <property type="entry name" value="Peptidase_M20"/>
    <property type="match status" value="1"/>
</dbReference>
<dbReference type="SUPFAM" id="SSF55031">
    <property type="entry name" value="Bacterial exopeptidase dimerisation domain"/>
    <property type="match status" value="1"/>
</dbReference>
<dbReference type="SUPFAM" id="SSF53187">
    <property type="entry name" value="Zn-dependent exopeptidases"/>
    <property type="match status" value="1"/>
</dbReference>
<evidence type="ECO:0000255" key="1">
    <source>
        <dbReference type="HAMAP-Rule" id="MF_01690"/>
    </source>
</evidence>